<keyword id="KW-0408">Iron</keyword>
<keyword id="KW-0411">Iron-sulfur</keyword>
<keyword id="KW-0479">Metal-binding</keyword>
<keyword id="KW-0535">Nitrogen fixation</keyword>
<keyword id="KW-0663">Pyridoxal phosphate</keyword>
<keyword id="KW-0808">Transferase</keyword>
<proteinExistence type="inferred from homology"/>
<sequence length="396" mass="43296">MADVYLDNNATTRVDDEIVEAMLPFFTEQFGNPSSLHSFGNQVGLALKRARQQRAGVLGEHDSEIIFTSCGTESDHAILSALSPARAQDLITTVVEHPAVLSLCDYLASEGYTVHKLPVDKKGRLDLDHYASLLNDDVAVVSVMWANNETGTLFPVEEMARMADEAGIMFHTDAVQAVRKLPIDLKNSSIHMLSLSGHKLHRKGVGVLYLRRGTRFRRCCRGHQERPAGGTENAASIIAMGWAAERALAFMEHENTEVKRLRDKLEAGILAVVPHAFVTGDPDNRLPNTANIAFEYIEGEAILLLLNKVGIAASSGSACTSGSLEPSHVMRAMDIPYTAAHGTVRFSLSRYTTEEEIDRVIREVPPIVAQLRNVSPYWSGNGPVEHPGKAFAPVYG</sequence>
<evidence type="ECO:0000250" key="1"/>
<evidence type="ECO:0000250" key="2">
    <source>
        <dbReference type="UniProtKB" id="O29689"/>
    </source>
</evidence>
<evidence type="ECO:0000250" key="3">
    <source>
        <dbReference type="UniProtKB" id="P05341"/>
    </source>
</evidence>
<evidence type="ECO:0000250" key="4">
    <source>
        <dbReference type="UniProtKB" id="P0A6B9"/>
    </source>
</evidence>
<evidence type="ECO:0000305" key="5"/>
<name>NIFS_AZOCH</name>
<dbReference type="EC" id="2.8.1.7" evidence="3"/>
<dbReference type="EMBL" id="M60090">
    <property type="protein sequence ID" value="AAA22160.1"/>
    <property type="molecule type" value="Genomic_DNA"/>
</dbReference>
<dbReference type="PIR" id="B43706">
    <property type="entry name" value="B43706"/>
</dbReference>
<dbReference type="SMR" id="P23120"/>
<dbReference type="GO" id="GO:0031071">
    <property type="term" value="F:cysteine desulfurase activity"/>
    <property type="evidence" value="ECO:0007669"/>
    <property type="project" value="UniProtKB-EC"/>
</dbReference>
<dbReference type="GO" id="GO:0051536">
    <property type="term" value="F:iron-sulfur cluster binding"/>
    <property type="evidence" value="ECO:0007669"/>
    <property type="project" value="UniProtKB-KW"/>
</dbReference>
<dbReference type="GO" id="GO:0046872">
    <property type="term" value="F:metal ion binding"/>
    <property type="evidence" value="ECO:0007669"/>
    <property type="project" value="UniProtKB-KW"/>
</dbReference>
<dbReference type="GO" id="GO:0030170">
    <property type="term" value="F:pyridoxal phosphate binding"/>
    <property type="evidence" value="ECO:0007669"/>
    <property type="project" value="InterPro"/>
</dbReference>
<dbReference type="GO" id="GO:0006520">
    <property type="term" value="P:amino acid metabolic process"/>
    <property type="evidence" value="ECO:0007669"/>
    <property type="project" value="InterPro"/>
</dbReference>
<dbReference type="GO" id="GO:0009399">
    <property type="term" value="P:nitrogen fixation"/>
    <property type="evidence" value="ECO:0007669"/>
    <property type="project" value="UniProtKB-KW"/>
</dbReference>
<dbReference type="FunFam" id="3.40.640.10:FF:000084">
    <property type="entry name" value="IscS-like cysteine desulfurase"/>
    <property type="match status" value="1"/>
</dbReference>
<dbReference type="Gene3D" id="1.10.260.50">
    <property type="match status" value="1"/>
</dbReference>
<dbReference type="Gene3D" id="3.90.1150.10">
    <property type="entry name" value="Aspartate Aminotransferase, domain 1"/>
    <property type="match status" value="1"/>
</dbReference>
<dbReference type="Gene3D" id="3.40.640.10">
    <property type="entry name" value="Type I PLP-dependent aspartate aminotransferase-like (Major domain)"/>
    <property type="match status" value="1"/>
</dbReference>
<dbReference type="InterPro" id="IPR000192">
    <property type="entry name" value="Aminotrans_V_dom"/>
</dbReference>
<dbReference type="InterPro" id="IPR020578">
    <property type="entry name" value="Aminotrans_V_PyrdxlP_BS"/>
</dbReference>
<dbReference type="InterPro" id="IPR017772">
    <property type="entry name" value="Cys_deSase_NifS_bac/arc"/>
</dbReference>
<dbReference type="InterPro" id="IPR016454">
    <property type="entry name" value="Cysteine_dSase"/>
</dbReference>
<dbReference type="InterPro" id="IPR015424">
    <property type="entry name" value="PyrdxlP-dep_Trfase"/>
</dbReference>
<dbReference type="InterPro" id="IPR015421">
    <property type="entry name" value="PyrdxlP-dep_Trfase_major"/>
</dbReference>
<dbReference type="InterPro" id="IPR015422">
    <property type="entry name" value="PyrdxlP-dep_Trfase_small"/>
</dbReference>
<dbReference type="NCBIfam" id="TIGR03402">
    <property type="entry name" value="FeS_nifS"/>
    <property type="match status" value="1"/>
</dbReference>
<dbReference type="PANTHER" id="PTHR11601:SF34">
    <property type="entry name" value="CYSTEINE DESULFURASE"/>
    <property type="match status" value="1"/>
</dbReference>
<dbReference type="PANTHER" id="PTHR11601">
    <property type="entry name" value="CYSTEINE DESULFURYLASE FAMILY MEMBER"/>
    <property type="match status" value="1"/>
</dbReference>
<dbReference type="Pfam" id="PF00266">
    <property type="entry name" value="Aminotran_5"/>
    <property type="match status" value="1"/>
</dbReference>
<dbReference type="PIRSF" id="PIRSF005572">
    <property type="entry name" value="NifS"/>
    <property type="match status" value="1"/>
</dbReference>
<dbReference type="SUPFAM" id="SSF53383">
    <property type="entry name" value="PLP-dependent transferases"/>
    <property type="match status" value="1"/>
</dbReference>
<dbReference type="PROSITE" id="PS00595">
    <property type="entry name" value="AA_TRANSFER_CLASS_5"/>
    <property type="match status" value="1"/>
</dbReference>
<accession>P23120</accession>
<protein>
    <recommendedName>
        <fullName evidence="3">Cysteine desulfurase</fullName>
        <ecNumber evidence="3">2.8.1.7</ecNumber>
    </recommendedName>
    <alternativeName>
        <fullName evidence="3">Nitrogenase metalloclusters biosynthesis protein NifS</fullName>
    </alternativeName>
</protein>
<gene>
    <name evidence="3" type="primary">nifS</name>
</gene>
<organism>
    <name type="scientific">Azotobacter chroococcum mcd 1</name>
    <dbReference type="NCBI Taxonomy" id="355"/>
    <lineage>
        <taxon>Bacteria</taxon>
        <taxon>Pseudomonadati</taxon>
        <taxon>Pseudomonadota</taxon>
        <taxon>Gammaproteobacteria</taxon>
        <taxon>Pseudomonadales</taxon>
        <taxon>Pseudomonadaceae</taxon>
        <taxon>Azotobacter</taxon>
    </lineage>
</organism>
<comment type="function">
    <text evidence="3">Catalyzes the removal of elemental sulfur atoms from cysteine to produce alanine. Seems to participate in the biosynthesis of the nitrogenase metalloclusters by providing the inorganic sulfur required for the Fe-S core formation.</text>
</comment>
<comment type="catalytic activity">
    <reaction evidence="3">
        <text>(sulfur carrier)-H + L-cysteine = (sulfur carrier)-SH + L-alanine</text>
        <dbReference type="Rhea" id="RHEA:43892"/>
        <dbReference type="Rhea" id="RHEA-COMP:14737"/>
        <dbReference type="Rhea" id="RHEA-COMP:14739"/>
        <dbReference type="ChEBI" id="CHEBI:29917"/>
        <dbReference type="ChEBI" id="CHEBI:35235"/>
        <dbReference type="ChEBI" id="CHEBI:57972"/>
        <dbReference type="ChEBI" id="CHEBI:64428"/>
        <dbReference type="EC" id="2.8.1.7"/>
    </reaction>
</comment>
<comment type="cofactor">
    <cofactor evidence="3">
        <name>pyridoxal 5'-phosphate</name>
        <dbReference type="ChEBI" id="CHEBI:597326"/>
    </cofactor>
</comment>
<comment type="subunit">
    <text evidence="3">Homodimer.</text>
</comment>
<comment type="similarity">
    <text evidence="5">Belongs to the class-V pyridoxal-phosphate-dependent aminotransferase family. NifS/IscS subfamily.</text>
</comment>
<feature type="initiator methionine" description="Removed" evidence="1">
    <location>
        <position position="1"/>
    </location>
</feature>
<feature type="chain" id="PRO_0000150251" description="Cysteine desulfurase">
    <location>
        <begin position="2"/>
        <end position="396"/>
    </location>
</feature>
<feature type="active site" description="Cysteine persulfide intermediate" evidence="3">
    <location>
        <position position="319"/>
    </location>
</feature>
<feature type="binding site" evidence="4">
    <location>
        <begin position="71"/>
        <end position="72"/>
    </location>
    <ligand>
        <name>pyridoxal 5'-phosphate</name>
        <dbReference type="ChEBI" id="CHEBI:597326"/>
    </ligand>
</feature>
<feature type="binding site" evidence="2">
    <location>
        <position position="148"/>
    </location>
    <ligand>
        <name>pyridoxal 5'-phosphate</name>
        <dbReference type="ChEBI" id="CHEBI:597326"/>
    </ligand>
</feature>
<feature type="binding site" evidence="4">
    <location>
        <position position="176"/>
    </location>
    <ligand>
        <name>pyridoxal 5'-phosphate</name>
        <dbReference type="ChEBI" id="CHEBI:597326"/>
    </ligand>
</feature>
<feature type="binding site" evidence="4">
    <location>
        <begin position="196"/>
        <end position="198"/>
    </location>
    <ligand>
        <name>pyridoxal 5'-phosphate</name>
        <dbReference type="ChEBI" id="CHEBI:597326"/>
    </ligand>
</feature>
<feature type="binding site" evidence="4">
    <location>
        <position position="231"/>
    </location>
    <ligand>
        <name>pyridoxal 5'-phosphate</name>
        <dbReference type="ChEBI" id="CHEBI:597326"/>
    </ligand>
</feature>
<feature type="binding site" description="via persulfide group" evidence="2">
    <location>
        <position position="319"/>
    </location>
    <ligand>
        <name>[2Fe-2S] cluster</name>
        <dbReference type="ChEBI" id="CHEBI:190135"/>
    </ligand>
</feature>
<feature type="modified residue" description="N6-(pyridoxal phosphate)lysine" evidence="4">
    <location>
        <position position="199"/>
    </location>
</feature>
<reference key="1">
    <citation type="journal article" date="1991" name="J. Bacteriol.">
        <title>Nucleotide sequence and genetic analysis of the Azotobacter chroococcum nifUSVWZM gene cluster, including a new gene (nifP) which encodes a serine acetyltransferase.</title>
        <authorList>
            <person name="Evans D.J."/>
            <person name="Jones R."/>
            <person name="Woodley P.R."/>
            <person name="Wilborn J.R."/>
            <person name="Robson R.L."/>
        </authorList>
    </citation>
    <scope>NUCLEOTIDE SEQUENCE [GENOMIC DNA]</scope>
</reference>